<proteinExistence type="inferred from homology"/>
<keyword id="KW-0963">Cytoplasm</keyword>
<keyword id="KW-0342">GTP-binding</keyword>
<keyword id="KW-0378">Hydrolase</keyword>
<keyword id="KW-0460">Magnesium</keyword>
<keyword id="KW-0479">Metal-binding</keyword>
<keyword id="KW-0547">Nucleotide-binding</keyword>
<keyword id="KW-0630">Potassium</keyword>
<keyword id="KW-0819">tRNA processing</keyword>
<evidence type="ECO:0000255" key="1">
    <source>
        <dbReference type="HAMAP-Rule" id="MF_00379"/>
    </source>
</evidence>
<name>MNME_RICTY</name>
<comment type="function">
    <text evidence="1">Exhibits a very high intrinsic GTPase hydrolysis rate. Involved in the addition of a carboxymethylaminomethyl (cmnm) group at the wobble position (U34) of certain tRNAs, forming tRNA-cmnm(5)s(2)U34.</text>
</comment>
<comment type="cofactor">
    <cofactor evidence="1">
        <name>K(+)</name>
        <dbReference type="ChEBI" id="CHEBI:29103"/>
    </cofactor>
    <text evidence="1">Binds 1 potassium ion per subunit.</text>
</comment>
<comment type="subunit">
    <text evidence="1">Homodimer. Heterotetramer of two MnmE and two MnmG subunits.</text>
</comment>
<comment type="subcellular location">
    <subcellularLocation>
        <location evidence="1">Cytoplasm</location>
    </subcellularLocation>
</comment>
<comment type="similarity">
    <text evidence="1">Belongs to the TRAFAC class TrmE-Era-EngA-EngB-Septin-like GTPase superfamily. TrmE GTPase family.</text>
</comment>
<accession>Q68VZ0</accession>
<feature type="chain" id="PRO_0000278005" description="tRNA modification GTPase MnmE">
    <location>
        <begin position="1"/>
        <end position="445"/>
    </location>
</feature>
<feature type="domain" description="TrmE-type G">
    <location>
        <begin position="215"/>
        <end position="371"/>
    </location>
</feature>
<feature type="binding site" evidence="1">
    <location>
        <position position="20"/>
    </location>
    <ligand>
        <name>(6S)-5-formyl-5,6,7,8-tetrahydrofolate</name>
        <dbReference type="ChEBI" id="CHEBI:57457"/>
    </ligand>
</feature>
<feature type="binding site" evidence="1">
    <location>
        <position position="79"/>
    </location>
    <ligand>
        <name>(6S)-5-formyl-5,6,7,8-tetrahydrofolate</name>
        <dbReference type="ChEBI" id="CHEBI:57457"/>
    </ligand>
</feature>
<feature type="binding site" evidence="1">
    <location>
        <position position="119"/>
    </location>
    <ligand>
        <name>(6S)-5-formyl-5,6,7,8-tetrahydrofolate</name>
        <dbReference type="ChEBI" id="CHEBI:57457"/>
    </ligand>
</feature>
<feature type="binding site" evidence="1">
    <location>
        <begin position="225"/>
        <end position="230"/>
    </location>
    <ligand>
        <name>GTP</name>
        <dbReference type="ChEBI" id="CHEBI:37565"/>
    </ligand>
</feature>
<feature type="binding site" evidence="1">
    <location>
        <position position="225"/>
    </location>
    <ligand>
        <name>K(+)</name>
        <dbReference type="ChEBI" id="CHEBI:29103"/>
    </ligand>
</feature>
<feature type="binding site" evidence="1">
    <location>
        <position position="229"/>
    </location>
    <ligand>
        <name>Mg(2+)</name>
        <dbReference type="ChEBI" id="CHEBI:18420"/>
    </ligand>
</feature>
<feature type="binding site" evidence="1">
    <location>
        <begin position="244"/>
        <end position="250"/>
    </location>
    <ligand>
        <name>GTP</name>
        <dbReference type="ChEBI" id="CHEBI:37565"/>
    </ligand>
</feature>
<feature type="binding site" evidence="1">
    <location>
        <position position="244"/>
    </location>
    <ligand>
        <name>K(+)</name>
        <dbReference type="ChEBI" id="CHEBI:29103"/>
    </ligand>
</feature>
<feature type="binding site" evidence="1">
    <location>
        <position position="246"/>
    </location>
    <ligand>
        <name>K(+)</name>
        <dbReference type="ChEBI" id="CHEBI:29103"/>
    </ligand>
</feature>
<feature type="binding site" evidence="1">
    <location>
        <position position="249"/>
    </location>
    <ligand>
        <name>K(+)</name>
        <dbReference type="ChEBI" id="CHEBI:29103"/>
    </ligand>
</feature>
<feature type="binding site" evidence="1">
    <location>
        <position position="250"/>
    </location>
    <ligand>
        <name>Mg(2+)</name>
        <dbReference type="ChEBI" id="CHEBI:18420"/>
    </ligand>
</feature>
<feature type="binding site" evidence="1">
    <location>
        <begin position="269"/>
        <end position="272"/>
    </location>
    <ligand>
        <name>GTP</name>
        <dbReference type="ChEBI" id="CHEBI:37565"/>
    </ligand>
</feature>
<feature type="binding site" evidence="1">
    <location>
        <position position="445"/>
    </location>
    <ligand>
        <name>(6S)-5-formyl-5,6,7,8-tetrahydrofolate</name>
        <dbReference type="ChEBI" id="CHEBI:57457"/>
    </ligand>
</feature>
<sequence length="445" mass="49892">METIFAQSSAFGKAGVAVFRISGPKSLEVLQLLTGRKDFKPRLMYYQQIISPETNELIDNAMVVYFKLPNSFTGEDVVEIHTHGSKAISIMLINTLLNIDDIRLAEAGEFTKRAFLNNKFDLTAAEGIADLINAETIMQHRQAVRQANGGLEELYNNWRNQLLKIIALLEAYLDFPDEDIPDSILNDVNNTHKNIVNEISNYLNDNRRGELLNNGLKLAIIGPPNTGKSSLLNFLMQRNIAIVSNIAGTTRDIIEGHLDIGGYPIILQDTAGIRAESTDIIEREGIKRAINSAKTANIKIIMFDAEKLDLSINNDIIDLIDENTIVIINKIDLIEPSQIFPIEKKYKCLRVSVKNNIALSSILKNIENIAENIAGFTETPYITNQRHRHYLKQALSHLMAFNLDNDLVLATEDMRMTARCIGLITGVINVEEILNEIFKNFCIGK</sequence>
<reference key="1">
    <citation type="journal article" date="2004" name="J. Bacteriol.">
        <title>Complete genome sequence of Rickettsia typhi and comparison with sequences of other Rickettsiae.</title>
        <authorList>
            <person name="McLeod M.P."/>
            <person name="Qin X."/>
            <person name="Karpathy S.E."/>
            <person name="Gioia J."/>
            <person name="Highlander S.K."/>
            <person name="Fox G.E."/>
            <person name="McNeill T.Z."/>
            <person name="Jiang H."/>
            <person name="Muzny D."/>
            <person name="Jacob L.S."/>
            <person name="Hawes A.C."/>
            <person name="Sodergren E."/>
            <person name="Gill R."/>
            <person name="Hume J."/>
            <person name="Morgan M."/>
            <person name="Fan G."/>
            <person name="Amin A.G."/>
            <person name="Gibbs R.A."/>
            <person name="Hong C."/>
            <person name="Yu X.-J."/>
            <person name="Walker D.H."/>
            <person name="Weinstock G.M."/>
        </authorList>
    </citation>
    <scope>NUCLEOTIDE SEQUENCE [LARGE SCALE GENOMIC DNA]</scope>
    <source>
        <strain>ATCC VR-144 / Wilmington</strain>
    </source>
</reference>
<protein>
    <recommendedName>
        <fullName evidence="1">tRNA modification GTPase MnmE</fullName>
        <ecNumber evidence="1">3.6.-.-</ecNumber>
    </recommendedName>
</protein>
<gene>
    <name evidence="1" type="primary">mnmE</name>
    <name evidence="1" type="synonym">trmE</name>
    <name type="ordered locus">RT0745</name>
</gene>
<organism>
    <name type="scientific">Rickettsia typhi (strain ATCC VR-144 / Wilmington)</name>
    <dbReference type="NCBI Taxonomy" id="257363"/>
    <lineage>
        <taxon>Bacteria</taxon>
        <taxon>Pseudomonadati</taxon>
        <taxon>Pseudomonadota</taxon>
        <taxon>Alphaproteobacteria</taxon>
        <taxon>Rickettsiales</taxon>
        <taxon>Rickettsiaceae</taxon>
        <taxon>Rickettsieae</taxon>
        <taxon>Rickettsia</taxon>
        <taxon>typhus group</taxon>
    </lineage>
</organism>
<dbReference type="EC" id="3.6.-.-" evidence="1"/>
<dbReference type="EMBL" id="AE017197">
    <property type="protein sequence ID" value="AAU04202.1"/>
    <property type="molecule type" value="Genomic_DNA"/>
</dbReference>
<dbReference type="RefSeq" id="WP_011191178.1">
    <property type="nucleotide sequence ID" value="NC_006142.1"/>
</dbReference>
<dbReference type="SMR" id="Q68VZ0"/>
<dbReference type="KEGG" id="rty:RT0745"/>
<dbReference type="eggNOG" id="COG0486">
    <property type="taxonomic scope" value="Bacteria"/>
</dbReference>
<dbReference type="HOGENOM" id="CLU_019624_3_1_5"/>
<dbReference type="OrthoDB" id="9805918at2"/>
<dbReference type="Proteomes" id="UP000000604">
    <property type="component" value="Chromosome"/>
</dbReference>
<dbReference type="GO" id="GO:0005737">
    <property type="term" value="C:cytoplasm"/>
    <property type="evidence" value="ECO:0007669"/>
    <property type="project" value="UniProtKB-SubCell"/>
</dbReference>
<dbReference type="GO" id="GO:0005525">
    <property type="term" value="F:GTP binding"/>
    <property type="evidence" value="ECO:0007669"/>
    <property type="project" value="UniProtKB-UniRule"/>
</dbReference>
<dbReference type="GO" id="GO:0003924">
    <property type="term" value="F:GTPase activity"/>
    <property type="evidence" value="ECO:0007669"/>
    <property type="project" value="UniProtKB-UniRule"/>
</dbReference>
<dbReference type="GO" id="GO:0046872">
    <property type="term" value="F:metal ion binding"/>
    <property type="evidence" value="ECO:0007669"/>
    <property type="project" value="UniProtKB-KW"/>
</dbReference>
<dbReference type="GO" id="GO:0030488">
    <property type="term" value="P:tRNA methylation"/>
    <property type="evidence" value="ECO:0007669"/>
    <property type="project" value="TreeGrafter"/>
</dbReference>
<dbReference type="GO" id="GO:0002098">
    <property type="term" value="P:tRNA wobble uridine modification"/>
    <property type="evidence" value="ECO:0007669"/>
    <property type="project" value="TreeGrafter"/>
</dbReference>
<dbReference type="CDD" id="cd04164">
    <property type="entry name" value="trmE"/>
    <property type="match status" value="1"/>
</dbReference>
<dbReference type="CDD" id="cd14858">
    <property type="entry name" value="TrmE_N"/>
    <property type="match status" value="1"/>
</dbReference>
<dbReference type="FunFam" id="3.30.1360.120:FF:000007">
    <property type="entry name" value="tRNA modification GTPase GTPBP3, mitochondrial"/>
    <property type="match status" value="1"/>
</dbReference>
<dbReference type="Gene3D" id="3.40.50.300">
    <property type="entry name" value="P-loop containing nucleotide triphosphate hydrolases"/>
    <property type="match status" value="1"/>
</dbReference>
<dbReference type="Gene3D" id="3.30.1360.120">
    <property type="entry name" value="Probable tRNA modification gtpase trme, domain 1"/>
    <property type="match status" value="1"/>
</dbReference>
<dbReference type="Gene3D" id="1.20.120.430">
    <property type="entry name" value="tRNA modification GTPase MnmE domain 2"/>
    <property type="match status" value="1"/>
</dbReference>
<dbReference type="HAMAP" id="MF_00379">
    <property type="entry name" value="GTPase_MnmE"/>
    <property type="match status" value="1"/>
</dbReference>
<dbReference type="InterPro" id="IPR031168">
    <property type="entry name" value="G_TrmE"/>
</dbReference>
<dbReference type="InterPro" id="IPR006073">
    <property type="entry name" value="GTP-bd"/>
</dbReference>
<dbReference type="InterPro" id="IPR018948">
    <property type="entry name" value="GTP-bd_TrmE_N"/>
</dbReference>
<dbReference type="InterPro" id="IPR004520">
    <property type="entry name" value="GTPase_MnmE"/>
</dbReference>
<dbReference type="InterPro" id="IPR008144">
    <property type="entry name" value="Guanylate_kin-like_dom"/>
</dbReference>
<dbReference type="InterPro" id="IPR027368">
    <property type="entry name" value="MnmE_dom2"/>
</dbReference>
<dbReference type="InterPro" id="IPR025867">
    <property type="entry name" value="MnmE_helical"/>
</dbReference>
<dbReference type="InterPro" id="IPR027417">
    <property type="entry name" value="P-loop_NTPase"/>
</dbReference>
<dbReference type="InterPro" id="IPR005225">
    <property type="entry name" value="Small_GTP-bd"/>
</dbReference>
<dbReference type="InterPro" id="IPR027266">
    <property type="entry name" value="TrmE/GcvT_dom1"/>
</dbReference>
<dbReference type="NCBIfam" id="TIGR00450">
    <property type="entry name" value="mnmE_trmE_thdF"/>
    <property type="match status" value="1"/>
</dbReference>
<dbReference type="NCBIfam" id="NF003661">
    <property type="entry name" value="PRK05291.1-3"/>
    <property type="match status" value="1"/>
</dbReference>
<dbReference type="NCBIfam" id="TIGR00231">
    <property type="entry name" value="small_GTP"/>
    <property type="match status" value="1"/>
</dbReference>
<dbReference type="PANTHER" id="PTHR42714">
    <property type="entry name" value="TRNA MODIFICATION GTPASE GTPBP3"/>
    <property type="match status" value="1"/>
</dbReference>
<dbReference type="PANTHER" id="PTHR42714:SF2">
    <property type="entry name" value="TRNA MODIFICATION GTPASE GTPBP3, MITOCHONDRIAL"/>
    <property type="match status" value="1"/>
</dbReference>
<dbReference type="Pfam" id="PF01926">
    <property type="entry name" value="MMR_HSR1"/>
    <property type="match status" value="1"/>
</dbReference>
<dbReference type="Pfam" id="PF12631">
    <property type="entry name" value="MnmE_helical"/>
    <property type="match status" value="1"/>
</dbReference>
<dbReference type="Pfam" id="PF10396">
    <property type="entry name" value="TrmE_N"/>
    <property type="match status" value="1"/>
</dbReference>
<dbReference type="SUPFAM" id="SSF52540">
    <property type="entry name" value="P-loop containing nucleoside triphosphate hydrolases"/>
    <property type="match status" value="1"/>
</dbReference>
<dbReference type="SUPFAM" id="SSF116878">
    <property type="entry name" value="TrmE connector domain"/>
    <property type="match status" value="1"/>
</dbReference>
<dbReference type="PROSITE" id="PS51709">
    <property type="entry name" value="G_TRME"/>
    <property type="match status" value="1"/>
</dbReference>